<name>NCAP_HRSV</name>
<gene>
    <name type="primary">N</name>
</gene>
<reference key="1">
    <citation type="journal article" date="1995" name="Proc. Natl. Acad. Sci. U.S.A.">
        <title>Production of infectious human respiratory syncytial virus from cloned cDNA confirms an essential role for the transcription elongation factor from the 5' proximal open reading frame of the M2 mRNA in gene expression and provides a capability for vaccine development.</title>
        <authorList>
            <person name="Collins P.L."/>
            <person name="Hill M.G."/>
            <person name="Camargo E."/>
            <person name="Grosfeld H."/>
            <person name="Chanock R.M."/>
            <person name="Murphy B.R."/>
        </authorList>
    </citation>
    <scope>NUCLEOTIDE SEQUENCE [LARGE SCALE GENOMIC DNA]</scope>
    <source>
        <strain>A2</strain>
    </source>
</reference>
<reference key="2">
    <citation type="journal article" date="2005" name="J. Virol.">
        <title>Respiratory syncytial virus nonstructural proteins NS1 and NS2 mediate inhibition of Stat2 expression and alpha/beta interferon responsiveness.</title>
        <authorList>
            <person name="Lo M.S."/>
            <person name="Brazas R.M."/>
            <person name="Holtzman M.J."/>
        </authorList>
    </citation>
    <scope>NUCLEOTIDE SEQUENCE [LARGE SCALE GENOMIC DNA]</scope>
    <source>
        <strain>ATCC VR-26</strain>
    </source>
</reference>
<reference key="3">
    <citation type="journal article" date="2011" name="PLoS ONE">
        <title>Whole Genome Sequencing and Evolutionary Analysis of Human Respiratory Syncytial Virus A and B from Milwaukee, WI 1998-2010.</title>
        <authorList>
            <person name="Rebuffo-Scheer C."/>
            <person name="Bose M.E."/>
            <person name="He J."/>
            <person name="Khaja S."/>
            <person name="Ulatowski M."/>
            <person name="Beck E.T."/>
            <person name="Fan J."/>
            <person name="Kumar S."/>
            <person name="Nelson M.I."/>
            <person name="Henrickson K.J."/>
        </authorList>
    </citation>
    <scope>NUCLEOTIDE SEQUENCE [LARGE SCALE GENOMIC DNA]</scope>
    <source>
        <strain>A/WI/629-3/06-07</strain>
    </source>
</reference>
<reference key="4">
    <citation type="journal article" date="2011" name="Virol. J.">
        <title>Whole genome characterization of non-tissue culture adapted HRSV strains in severely infected children.</title>
        <authorList>
            <person name="Kumaria R."/>
            <person name="Iyer L.R."/>
            <person name="Hibberd M.L."/>
            <person name="Simoes E.A."/>
            <person name="Sugrue R.J."/>
        </authorList>
    </citation>
    <scope>NUCLEOTIDE SEQUENCE [LARGE SCALE GENOMIC DNA]</scope>
    <source>
        <strain>RSV-4</strain>
    </source>
</reference>
<reference key="5">
    <citation type="journal article" date="2011" name="Acta Crystallogr. F Struct. Biol. Commun.">
        <title>Structures of respiratory syncytial virus nucleocapsid protein from two crystal forms: details of potential packing interactions in the native helical form.</title>
        <authorList>
            <person name="El Omari K."/>
            <person name="Dhaliwal B."/>
            <person name="Ren J."/>
            <person name="Abrescia N.G."/>
            <person name="Lockyer M."/>
            <person name="Powell K.L."/>
            <person name="Hawkins A.R."/>
            <person name="Stammers D.K."/>
        </authorList>
    </citation>
    <scope>X-RAY CRYSTALLOGRAPHY (3.60 ANGSTROMS) OF 1-375</scope>
</reference>
<sequence>MALSKVKLNDTLNKDQLLSSSKYTIQRSTGDSIDTPNYDVQKHINKLCGMLLITEDANHKFTGLIGMLYAMSRLGREDTIKILRDAGYHVKANGVDVTTHRQDINGKEMKFEVLTLASLTTEIQINIEIESRKSYKKMLKEMGEVAPEYRHDSPDCGMIILCIAALVITKLAAGDRSGLTAVIRRANNVLKNEMKRYKGLLPKDIANSFYEVFEKHPHFIDVFVHFGIAQSSTRGGSRVEGIFAGLFMNAYGAGQVMLRWGVLAKSVKNIMLGHASVQAEMEQVVEVYEYAQKLGGEAGFYHILNNPKASLLSLTQFPHFSSVVLGNAAGLGIMGEYRGTPRNQDLYDAAKAYAEQLKENGVINYSVLDLTAEELEAIKHQLNPKDNDVEL</sequence>
<keyword id="KW-0002">3D-structure</keyword>
<keyword id="KW-0167">Capsid protein</keyword>
<keyword id="KW-1139">Helical capsid protein</keyword>
<keyword id="KW-1035">Host cytoplasm</keyword>
<keyword id="KW-0945">Host-virus interaction</keyword>
<keyword id="KW-1090">Inhibition of host innate immune response by virus</keyword>
<keyword id="KW-1114">Inhibition of host interferon signaling pathway by virus</keyword>
<keyword id="KW-1097">Inhibition of host MAVS by virus</keyword>
<keyword id="KW-1089">Inhibition of host MDA5 by virus</keyword>
<keyword id="KW-1100">Inhibition of host NF-kappa-B by virus</keyword>
<keyword id="KW-1102">Inhibition of host PKR by virus</keyword>
<keyword id="KW-1113">Inhibition of host RLR pathway by virus</keyword>
<keyword id="KW-0922">Interferon antiviral system evasion</keyword>
<keyword id="KW-0597">Phosphoprotein</keyword>
<keyword id="KW-0687">Ribonucleoprotein</keyword>
<keyword id="KW-0694">RNA-binding</keyword>
<keyword id="KW-0899">Viral immunoevasion</keyword>
<keyword id="KW-0543">Viral nucleoprotein</keyword>
<keyword id="KW-0946">Virion</keyword>
<comment type="function">
    <text evidence="1">Encapsidates the viral RNA genome by forming a left-handed helical nucleocapsid that protects the RNA from nucleases. RNA replication depends on the availability of soluble nucleoprotein. The encapsidated genomic RNA is termed the NC and serves as template for transcription and replication. Together with the phosphoprotein, sequesters host NF-kappa-B in inclusion bodies (IBs) thereby inhibiting this host defense pathway. May also act as a modulator of the innate immune response by sequestration of host IFIH1/MDA5 and MAVS into IBs.</text>
</comment>
<comment type="subunit">
    <text evidence="1 2">Homomultimerizes to form the nucleocapsid. Binds to viral genomic RNA. Interacts (via N-terminus) with the phosphoprotein P (via C-terminus); the phosphorylated phosphoprotein P binds to N-RNA complex. When in a monomeric RNA-free form, interacts with the phosphoprotein (via N-terminus). Interacts with protein M2-1; this interaction allows the association of nucleocapsid with the matrix protein. Interacts with host EIF2AK2/PKR; this interaction inhibits EIF2AK2 phosphorylation of EIF2S1 and blocks EIF2AK2-mediated translation shutoff. Interacts with host EIF1AX; this interaction recruits EIF1AX to the viral replication complex to facilitate viral genomic RNA synthesis and virus production (By similarity). Interacts with host NF-kappa-B; this interaction sequesters NF-kappa-B in inclusion bodies (By similarity). Interacts with host TAX1BP1; this interaction may promote viral growth by inhibiting the innate immune response (By similarity).</text>
</comment>
<comment type="subcellular location">
    <subcellularLocation>
        <location evidence="1">Virion</location>
    </subcellularLocation>
    <subcellularLocation>
        <location evidence="1">Host cytoplasm</location>
    </subcellularLocation>
    <text evidence="1">Localizes in cytoplasmic inclusion bodies.</text>
</comment>
<comment type="PTM">
    <text evidence="1">Tyrosine phosphorylation modulates viral transcription and replication.</text>
</comment>
<comment type="similarity">
    <text evidence="3">Belongs to the paramyxoviruses nucleocapsid family.</text>
</comment>
<organism>
    <name type="scientific">Human respiratory syncytial virus</name>
    <dbReference type="NCBI Taxonomy" id="11250"/>
    <lineage>
        <taxon>Viruses</taxon>
        <taxon>Riboviria</taxon>
        <taxon>Orthornavirae</taxon>
        <taxon>Negarnaviricota</taxon>
        <taxon>Haploviricotina</taxon>
        <taxon>Monjiviricetes</taxon>
        <taxon>Mononegavirales</taxon>
        <taxon>Pneumoviridae</taxon>
        <taxon>Orthopneumovirus</taxon>
        <taxon>Orthopneumovirus hominis</taxon>
    </lineage>
</organism>
<organismHost>
    <name type="scientific">Homo sapiens</name>
    <name type="common">Human</name>
    <dbReference type="NCBI Taxonomy" id="9606"/>
</organismHost>
<feature type="chain" id="PRO_0000458090" description="Nucleoprotein">
    <location>
        <begin position="1"/>
        <end position="391"/>
    </location>
</feature>
<feature type="region of interest" description="Interaction with the phosphoprotein" evidence="1">
    <location>
        <begin position="31"/>
        <end position="252"/>
    </location>
</feature>
<feature type="region of interest" description="Interaction with the phosphoprotein" evidence="2">
    <location>
        <begin position="244"/>
        <end position="290"/>
    </location>
</feature>
<feature type="region of interest" description="Interaction with the phosphoprotein" evidence="2">
    <location>
        <begin position="338"/>
        <end position="364"/>
    </location>
</feature>
<feature type="modified residue" description="Phosphotyrosine" evidence="1">
    <location>
        <position position="38"/>
    </location>
</feature>
<proteinExistence type="evidence at protein level"/>
<dbReference type="EMBL" id="AY911262">
    <property type="protein sequence ID" value="AAX23989.1"/>
    <property type="molecule type" value="Genomic_RNA"/>
</dbReference>
<dbReference type="EMBL" id="GU591761">
    <property type="protein sequence ID" value="AEO45845.1"/>
    <property type="molecule type" value="Viral_cRNA"/>
</dbReference>
<dbReference type="EMBL" id="JF920069">
    <property type="protein sequence ID" value="AEQ63559.1"/>
    <property type="molecule type" value="Viral_cRNA"/>
</dbReference>
<dbReference type="EMBL" id="KJ723461">
    <property type="protein sequence ID" value="AHY21138.1"/>
    <property type="molecule type" value="Viral_cRNA"/>
</dbReference>
<dbReference type="EMBL" id="KJ723467">
    <property type="protein sequence ID" value="AHY21205.1"/>
    <property type="molecule type" value="Viral_cRNA"/>
</dbReference>
<dbReference type="EMBL" id="KJ723474">
    <property type="protein sequence ID" value="AHY21271.1"/>
    <property type="molecule type" value="Viral_cRNA"/>
</dbReference>
<dbReference type="EMBL" id="KJ723475">
    <property type="protein sequence ID" value="AHY21282.1"/>
    <property type="molecule type" value="Viral_cRNA"/>
</dbReference>
<dbReference type="EMBL" id="KJ723478">
    <property type="protein sequence ID" value="AHY21315.1"/>
    <property type="molecule type" value="Viral_cRNA"/>
</dbReference>
<dbReference type="EMBL" id="KJ723491">
    <property type="protein sequence ID" value="AHY21447.1"/>
    <property type="molecule type" value="Viral_cRNA"/>
</dbReference>
<dbReference type="EMBL" id="KP258695">
    <property type="protein sequence ID" value="AIZ95492.1"/>
    <property type="molecule type" value="Viral_cRNA"/>
</dbReference>
<dbReference type="EMBL" id="KP258717">
    <property type="protein sequence ID" value="AIZ95712.1"/>
    <property type="molecule type" value="Viral_cRNA"/>
</dbReference>
<dbReference type="EMBL" id="KP258719">
    <property type="protein sequence ID" value="AIZ95734.1"/>
    <property type="molecule type" value="Viral_cRNA"/>
</dbReference>
<dbReference type="EMBL" id="KP258729">
    <property type="protein sequence ID" value="AIZ95844.1"/>
    <property type="molecule type" value="Viral_cRNA"/>
</dbReference>
<dbReference type="EMBL" id="KP258730">
    <property type="protein sequence ID" value="AIZ95855.1"/>
    <property type="molecule type" value="Viral_cRNA"/>
</dbReference>
<dbReference type="EMBL" id="KP258741">
    <property type="protein sequence ID" value="AIZ95976.1"/>
    <property type="molecule type" value="Viral_cRNA"/>
</dbReference>
<dbReference type="EMBL" id="KP258744">
    <property type="protein sequence ID" value="AIZ96009.1"/>
    <property type="molecule type" value="Viral_cRNA"/>
</dbReference>
<dbReference type="EMBL" id="KT992094">
    <property type="protein sequence ID" value="ALS35585.1"/>
    <property type="molecule type" value="Viral_cRNA"/>
</dbReference>
<dbReference type="EMBL" id="KU316099">
    <property type="protein sequence ID" value="AMA66432.1"/>
    <property type="molecule type" value="Viral_cRNA"/>
</dbReference>
<dbReference type="EMBL" id="KU316103">
    <property type="protein sequence ID" value="AMA66476.1"/>
    <property type="molecule type" value="Viral_cRNA"/>
</dbReference>
<dbReference type="EMBL" id="KU316106">
    <property type="protein sequence ID" value="AMA66509.1"/>
    <property type="molecule type" value="Viral_cRNA"/>
</dbReference>
<dbReference type="EMBL" id="KU316107">
    <property type="protein sequence ID" value="AMA66520.1"/>
    <property type="molecule type" value="Viral_cRNA"/>
</dbReference>
<dbReference type="EMBL" id="KU316109">
    <property type="protein sequence ID" value="AMA66542.1"/>
    <property type="molecule type" value="Viral_cRNA"/>
</dbReference>
<dbReference type="EMBL" id="KU316119">
    <property type="protein sequence ID" value="AMA66652.1"/>
    <property type="molecule type" value="Viral_cRNA"/>
</dbReference>
<dbReference type="EMBL" id="KU316120">
    <property type="protein sequence ID" value="AMA66663.1"/>
    <property type="molecule type" value="Viral_cRNA"/>
</dbReference>
<dbReference type="EMBL" id="KU316123">
    <property type="protein sequence ID" value="AMA66696.1"/>
    <property type="molecule type" value="Viral_cRNA"/>
</dbReference>
<dbReference type="EMBL" id="KU316124">
    <property type="protein sequence ID" value="AMA66707.1"/>
    <property type="molecule type" value="Viral_cRNA"/>
</dbReference>
<dbReference type="EMBL" id="KU316140">
    <property type="protein sequence ID" value="AMA66883.1"/>
    <property type="molecule type" value="Viral_cRNA"/>
</dbReference>
<dbReference type="EMBL" id="KU316146">
    <property type="protein sequence ID" value="AMA66949.1"/>
    <property type="molecule type" value="Viral_cRNA"/>
</dbReference>
<dbReference type="EMBL" id="KU316152">
    <property type="protein sequence ID" value="AMA67015.1"/>
    <property type="molecule type" value="Viral_cRNA"/>
</dbReference>
<dbReference type="EMBL" id="KU316153">
    <property type="protein sequence ID" value="AMA67026.1"/>
    <property type="molecule type" value="Viral_cRNA"/>
</dbReference>
<dbReference type="EMBL" id="KU316154">
    <property type="protein sequence ID" value="AMA67037.1"/>
    <property type="molecule type" value="Viral_cRNA"/>
</dbReference>
<dbReference type="EMBL" id="KU316155">
    <property type="protein sequence ID" value="AMA67048.1"/>
    <property type="molecule type" value="Viral_cRNA"/>
</dbReference>
<dbReference type="EMBL" id="KU316160">
    <property type="protein sequence ID" value="AMA67103.1"/>
    <property type="molecule type" value="Viral_cRNA"/>
</dbReference>
<dbReference type="EMBL" id="KU316162">
    <property type="protein sequence ID" value="AMA67125.1"/>
    <property type="molecule type" value="Viral_cRNA"/>
</dbReference>
<dbReference type="EMBL" id="KU316164">
    <property type="protein sequence ID" value="AMA67147.1"/>
    <property type="molecule type" value="Viral_cRNA"/>
</dbReference>
<dbReference type="EMBL" id="KU316165">
    <property type="protein sequence ID" value="AMA67158.1"/>
    <property type="molecule type" value="Viral_cRNA"/>
</dbReference>
<dbReference type="EMBL" id="KU316168">
    <property type="protein sequence ID" value="AMA67191.1"/>
    <property type="molecule type" value="Viral_cRNA"/>
</dbReference>
<dbReference type="EMBL" id="KU316169">
    <property type="protein sequence ID" value="AMA67202.1"/>
    <property type="molecule type" value="Viral_cRNA"/>
</dbReference>
<dbReference type="EMBL" id="KU316174">
    <property type="protein sequence ID" value="AMA67257.1"/>
    <property type="molecule type" value="Viral_cRNA"/>
</dbReference>
<dbReference type="EMBL" id="KY418147">
    <property type="protein sequence ID" value="APW29967.1"/>
    <property type="molecule type" value="Viral_cRNA"/>
</dbReference>
<dbReference type="EMBL" id="KY418148">
    <property type="protein sequence ID" value="APW29978.1"/>
    <property type="molecule type" value="Viral_cRNA"/>
</dbReference>
<dbReference type="EMBL" id="MG813989">
    <property type="protein sequence ID" value="AZQ19605.1"/>
    <property type="molecule type" value="Viral_cRNA"/>
</dbReference>
<dbReference type="RefSeq" id="YP_009518852.1">
    <property type="nucleotide sequence ID" value="NC_038235.1"/>
</dbReference>
<dbReference type="PDB" id="4V5V">
    <property type="method" value="X-ray"/>
    <property type="resolution" value="3.60 A"/>
    <property type="chains" value="AA/AB/AC/AD/AE/AF/AG/AH/AI/AJ/AL/AN/AO/AP/AQ/AR/AS/AT/AU/AV/BA/BB/BC/BD/BE/BF/BG/BH/BI/BJ=1-375"/>
</dbReference>
<dbReference type="PDBsum" id="4V5V"/>
<dbReference type="SMR" id="Q4KRW9"/>
<dbReference type="GeneID" id="37607638"/>
<dbReference type="OrthoDB" id="3012at10239"/>
<dbReference type="Proteomes" id="UP000095949">
    <property type="component" value="Genome"/>
</dbReference>
<dbReference type="Proteomes" id="UP000104352">
    <property type="component" value="Genome"/>
</dbReference>
<dbReference type="Proteomes" id="UP000106168">
    <property type="component" value="Genome"/>
</dbReference>
<dbReference type="Proteomes" id="UP000107497">
    <property type="component" value="Genome"/>
</dbReference>
<dbReference type="Proteomes" id="UP000107744">
    <property type="component" value="Genome"/>
</dbReference>
<dbReference type="Proteomes" id="UP000108641">
    <property type="component" value="Genome"/>
</dbReference>
<dbReference type="Proteomes" id="UP000108691">
    <property type="component" value="Genome"/>
</dbReference>
<dbReference type="Proteomes" id="UP000110532">
    <property type="component" value="Genome"/>
</dbReference>
<dbReference type="Proteomes" id="UP000112280">
    <property type="component" value="Genome"/>
</dbReference>
<dbReference type="Proteomes" id="UP000113202">
    <property type="component" value="Genome"/>
</dbReference>
<dbReference type="Proteomes" id="UP000114754">
    <property type="component" value="Genome"/>
</dbReference>
<dbReference type="Proteomes" id="UP000125194">
    <property type="component" value="Genome"/>
</dbReference>
<dbReference type="Proteomes" id="UP000129404">
    <property type="component" value="Genome"/>
</dbReference>
<dbReference type="Proteomes" id="UP000130292">
    <property type="component" value="Genome"/>
</dbReference>
<dbReference type="Proteomes" id="UP000130624">
    <property type="component" value="Genome"/>
</dbReference>
<dbReference type="Proteomes" id="UP000131879">
    <property type="component" value="Genome"/>
</dbReference>
<dbReference type="Proteomes" id="UP000132523">
    <property type="component" value="Genome"/>
</dbReference>
<dbReference type="Proteomes" id="UP000137337">
    <property type="component" value="Genome"/>
</dbReference>
<dbReference type="Proteomes" id="UP000138546">
    <property type="component" value="Genome"/>
</dbReference>
<dbReference type="Proteomes" id="UP000138826">
    <property type="component" value="Genome"/>
</dbReference>
<dbReference type="Proteomes" id="UP000140753">
    <property type="component" value="Genome"/>
</dbReference>
<dbReference type="Proteomes" id="UP000143862">
    <property type="component" value="Genome"/>
</dbReference>
<dbReference type="Proteomes" id="UP000143940">
    <property type="component" value="Genome"/>
</dbReference>
<dbReference type="Proteomes" id="UP000145303">
    <property type="component" value="Genome"/>
</dbReference>
<dbReference type="Proteomes" id="UP000145641">
    <property type="component" value="Genome"/>
</dbReference>
<dbReference type="Proteomes" id="UP000151571">
    <property type="component" value="Genome"/>
</dbReference>
<dbReference type="Proteomes" id="UP000153528">
    <property type="component" value="Genome"/>
</dbReference>
<dbReference type="Proteomes" id="UP000153600">
    <property type="component" value="Genome"/>
</dbReference>
<dbReference type="Proteomes" id="UP000154981">
    <property type="component" value="Genome"/>
</dbReference>
<dbReference type="Proteomes" id="UP000158141">
    <property type="component" value="Genome"/>
</dbReference>
<dbReference type="Proteomes" id="UP000160724">
    <property type="component" value="Genome"/>
</dbReference>
<dbReference type="Proteomes" id="UP000161554">
    <property type="component" value="Genome"/>
</dbReference>
<dbReference type="Proteomes" id="UP000165575">
    <property type="component" value="Genome"/>
</dbReference>
<dbReference type="Proteomes" id="UP000165962">
    <property type="component" value="Genome"/>
</dbReference>
<dbReference type="Proteomes" id="UP000168834">
    <property type="component" value="Genome"/>
</dbReference>
<dbReference type="Proteomes" id="UP000169852">
    <property type="component" value="Genome"/>
</dbReference>
<dbReference type="Proteomes" id="UP000170438">
    <property type="component" value="Genome"/>
</dbReference>
<dbReference type="Proteomes" id="UP000171008">
    <property type="component" value="Genome"/>
</dbReference>
<dbReference type="Proteomes" id="UP000181083">
    <property type="component" value="Genome"/>
</dbReference>
<dbReference type="GO" id="GO:0019029">
    <property type="term" value="C:helical viral capsid"/>
    <property type="evidence" value="ECO:0007669"/>
    <property type="project" value="UniProtKB-KW"/>
</dbReference>
<dbReference type="GO" id="GO:0030430">
    <property type="term" value="C:host cell cytoplasm"/>
    <property type="evidence" value="ECO:0007669"/>
    <property type="project" value="UniProtKB-SubCell"/>
</dbReference>
<dbReference type="GO" id="GO:1990904">
    <property type="term" value="C:ribonucleoprotein complex"/>
    <property type="evidence" value="ECO:0007669"/>
    <property type="project" value="UniProtKB-KW"/>
</dbReference>
<dbReference type="GO" id="GO:0019013">
    <property type="term" value="C:viral nucleocapsid"/>
    <property type="evidence" value="ECO:0007669"/>
    <property type="project" value="UniProtKB-KW"/>
</dbReference>
<dbReference type="GO" id="GO:0030291">
    <property type="term" value="F:protein serine/threonine kinase inhibitor activity"/>
    <property type="evidence" value="ECO:0007669"/>
    <property type="project" value="UniProtKB-KW"/>
</dbReference>
<dbReference type="GO" id="GO:0003723">
    <property type="term" value="F:RNA binding"/>
    <property type="evidence" value="ECO:0007669"/>
    <property type="project" value="UniProtKB-KW"/>
</dbReference>
<dbReference type="GO" id="GO:0039545">
    <property type="term" value="P:symbiont-mediated suppression of host cytoplasmic pattern recognition receptor signaling pathway via inhibition of MAVS activity"/>
    <property type="evidence" value="ECO:0007669"/>
    <property type="project" value="UniProtKB-KW"/>
</dbReference>
<dbReference type="GO" id="GO:0039554">
    <property type="term" value="P:symbiont-mediated suppression of host cytoplasmic pattern recognition receptor signaling pathway via inhibition of MDA-5 activity"/>
    <property type="evidence" value="ECO:0007669"/>
    <property type="project" value="UniProtKB-KW"/>
</dbReference>
<dbReference type="GO" id="GO:0085034">
    <property type="term" value="P:symbiont-mediated suppression of host NF-kappaB cascade"/>
    <property type="evidence" value="ECO:0007669"/>
    <property type="project" value="UniProtKB-KW"/>
</dbReference>
<dbReference type="GO" id="GO:0039580">
    <property type="term" value="P:symbiont-mediated suppression of host PKR/eIFalpha signaling"/>
    <property type="evidence" value="ECO:0007669"/>
    <property type="project" value="UniProtKB-KW"/>
</dbReference>
<dbReference type="GO" id="GO:0039502">
    <property type="term" value="P:symbiont-mediated suppression of host type I interferon-mediated signaling pathway"/>
    <property type="evidence" value="ECO:0007669"/>
    <property type="project" value="UniProtKB-KW"/>
</dbReference>
<dbReference type="InterPro" id="IPR004930">
    <property type="entry name" value="Pneumo_ncap"/>
</dbReference>
<dbReference type="Pfam" id="PF03246">
    <property type="entry name" value="Pneumo_ncap"/>
    <property type="match status" value="1"/>
</dbReference>
<evidence type="ECO:0000250" key="1">
    <source>
        <dbReference type="UniProtKB" id="P03418"/>
    </source>
</evidence>
<evidence type="ECO:0000250" key="2">
    <source>
        <dbReference type="UniProtKB" id="P22677"/>
    </source>
</evidence>
<evidence type="ECO:0000305" key="3"/>
<accession>Q4KRW9</accession>
<protein>
    <recommendedName>
        <fullName>Nucleoprotein</fullName>
        <shortName>Protein N</shortName>
    </recommendedName>
    <alternativeName>
        <fullName>Nucleocapsid protein</fullName>
    </alternativeName>
</protein>